<dbReference type="EC" id="2.1.2.9" evidence="2"/>
<dbReference type="EMBL" id="AK009430">
    <property type="protein sequence ID" value="BAB26282.1"/>
    <property type="molecule type" value="mRNA"/>
</dbReference>
<dbReference type="EMBL" id="AC114645">
    <property type="status" value="NOT_ANNOTATED_CDS"/>
    <property type="molecule type" value="Genomic_DNA"/>
</dbReference>
<dbReference type="EMBL" id="BC019509">
    <property type="protein sequence ID" value="AAH19509.1"/>
    <property type="molecule type" value="mRNA"/>
</dbReference>
<dbReference type="CCDS" id="CCDS23292.1"/>
<dbReference type="RefSeq" id="NP_081410.2">
    <property type="nucleotide sequence ID" value="NM_027134.3"/>
</dbReference>
<dbReference type="SMR" id="Q9D799"/>
<dbReference type="BioGRID" id="213566">
    <property type="interactions" value="1"/>
</dbReference>
<dbReference type="FunCoup" id="Q9D799">
    <property type="interactions" value="1089"/>
</dbReference>
<dbReference type="STRING" id="10090.ENSMUSP00000074347"/>
<dbReference type="GlyGen" id="Q9D799">
    <property type="glycosylation" value="1 site"/>
</dbReference>
<dbReference type="iPTMnet" id="Q9D799"/>
<dbReference type="PhosphoSitePlus" id="Q9D799"/>
<dbReference type="PaxDb" id="10090-ENSMUSP00000074347"/>
<dbReference type="ProteomicsDB" id="267386"/>
<dbReference type="Pumba" id="Q9D799"/>
<dbReference type="Antibodypedia" id="25895">
    <property type="antibodies" value="174 antibodies from 15 providers"/>
</dbReference>
<dbReference type="DNASU" id="69606"/>
<dbReference type="Ensembl" id="ENSMUST00000074792.7">
    <property type="protein sequence ID" value="ENSMUSP00000074347.7"/>
    <property type="gene ID" value="ENSMUSG00000059183.13"/>
</dbReference>
<dbReference type="GeneID" id="69606"/>
<dbReference type="KEGG" id="mmu:69606"/>
<dbReference type="UCSC" id="uc009qdh.2">
    <property type="organism name" value="mouse"/>
</dbReference>
<dbReference type="AGR" id="MGI:1916856"/>
<dbReference type="CTD" id="123263"/>
<dbReference type="MGI" id="MGI:1916856">
    <property type="gene designation" value="Mtfmt"/>
</dbReference>
<dbReference type="VEuPathDB" id="HostDB:ENSMUSG00000059183"/>
<dbReference type="eggNOG" id="KOG3082">
    <property type="taxonomic scope" value="Eukaryota"/>
</dbReference>
<dbReference type="GeneTree" id="ENSGT00390000017828"/>
<dbReference type="HOGENOM" id="CLU_033347_0_0_1"/>
<dbReference type="InParanoid" id="Q9D799"/>
<dbReference type="OMA" id="GASPIHE"/>
<dbReference type="OrthoDB" id="10268103at2759"/>
<dbReference type="PhylomeDB" id="Q9D799"/>
<dbReference type="TreeFam" id="TF323405"/>
<dbReference type="BioGRID-ORCS" id="69606">
    <property type="hits" value="14 hits in 78 CRISPR screens"/>
</dbReference>
<dbReference type="PRO" id="PR:Q9D799"/>
<dbReference type="Proteomes" id="UP000000589">
    <property type="component" value="Chromosome 9"/>
</dbReference>
<dbReference type="RNAct" id="Q9D799">
    <property type="molecule type" value="protein"/>
</dbReference>
<dbReference type="Bgee" id="ENSMUSG00000059183">
    <property type="expression patterns" value="Expressed in renal medulla collecting duct and 246 other cell types or tissues"/>
</dbReference>
<dbReference type="GO" id="GO:0005739">
    <property type="term" value="C:mitochondrion"/>
    <property type="evidence" value="ECO:0007005"/>
    <property type="project" value="MGI"/>
</dbReference>
<dbReference type="GO" id="GO:0004479">
    <property type="term" value="F:methionyl-tRNA formyltransferase activity"/>
    <property type="evidence" value="ECO:0000250"/>
    <property type="project" value="UniProtKB"/>
</dbReference>
<dbReference type="GO" id="GO:0071951">
    <property type="term" value="P:conversion of methionyl-tRNA to N-formyl-methionyl-tRNA"/>
    <property type="evidence" value="ECO:0000250"/>
    <property type="project" value="UniProtKB"/>
</dbReference>
<dbReference type="CDD" id="cd08646">
    <property type="entry name" value="FMT_core_Met-tRNA-FMT_N"/>
    <property type="match status" value="1"/>
</dbReference>
<dbReference type="FunFam" id="3.40.50.12230:FF:000003">
    <property type="entry name" value="methionyl-tRNA formyltransferase, mitochondrial"/>
    <property type="match status" value="1"/>
</dbReference>
<dbReference type="Gene3D" id="3.40.50.12230">
    <property type="match status" value="1"/>
</dbReference>
<dbReference type="InterPro" id="IPR005794">
    <property type="entry name" value="Fmt"/>
</dbReference>
<dbReference type="InterPro" id="IPR005793">
    <property type="entry name" value="Formyl_trans_C"/>
</dbReference>
<dbReference type="InterPro" id="IPR002376">
    <property type="entry name" value="Formyl_transf_N"/>
</dbReference>
<dbReference type="InterPro" id="IPR036477">
    <property type="entry name" value="Formyl_transf_N_sf"/>
</dbReference>
<dbReference type="InterPro" id="IPR041711">
    <property type="entry name" value="Met-tRNA-FMT_N"/>
</dbReference>
<dbReference type="NCBIfam" id="TIGR00460">
    <property type="entry name" value="fmt"/>
    <property type="match status" value="1"/>
</dbReference>
<dbReference type="PANTHER" id="PTHR11138">
    <property type="entry name" value="METHIONYL-TRNA FORMYLTRANSFERASE"/>
    <property type="match status" value="1"/>
</dbReference>
<dbReference type="PANTHER" id="PTHR11138:SF5">
    <property type="entry name" value="METHIONYL-TRNA FORMYLTRANSFERASE, MITOCHONDRIAL"/>
    <property type="match status" value="1"/>
</dbReference>
<dbReference type="Pfam" id="PF02911">
    <property type="entry name" value="Formyl_trans_C"/>
    <property type="match status" value="1"/>
</dbReference>
<dbReference type="Pfam" id="PF00551">
    <property type="entry name" value="Formyl_trans_N"/>
    <property type="match status" value="1"/>
</dbReference>
<dbReference type="SUPFAM" id="SSF53328">
    <property type="entry name" value="Formyltransferase"/>
    <property type="match status" value="1"/>
</dbReference>
<reference key="1">
    <citation type="journal article" date="2005" name="Science">
        <title>The transcriptional landscape of the mammalian genome.</title>
        <authorList>
            <person name="Carninci P."/>
            <person name="Kasukawa T."/>
            <person name="Katayama S."/>
            <person name="Gough J."/>
            <person name="Frith M.C."/>
            <person name="Maeda N."/>
            <person name="Oyama R."/>
            <person name="Ravasi T."/>
            <person name="Lenhard B."/>
            <person name="Wells C."/>
            <person name="Kodzius R."/>
            <person name="Shimokawa K."/>
            <person name="Bajic V.B."/>
            <person name="Brenner S.E."/>
            <person name="Batalov S."/>
            <person name="Forrest A.R."/>
            <person name="Zavolan M."/>
            <person name="Davis M.J."/>
            <person name="Wilming L.G."/>
            <person name="Aidinis V."/>
            <person name="Allen J.E."/>
            <person name="Ambesi-Impiombato A."/>
            <person name="Apweiler R."/>
            <person name="Aturaliya R.N."/>
            <person name="Bailey T.L."/>
            <person name="Bansal M."/>
            <person name="Baxter L."/>
            <person name="Beisel K.W."/>
            <person name="Bersano T."/>
            <person name="Bono H."/>
            <person name="Chalk A.M."/>
            <person name="Chiu K.P."/>
            <person name="Choudhary V."/>
            <person name="Christoffels A."/>
            <person name="Clutterbuck D.R."/>
            <person name="Crowe M.L."/>
            <person name="Dalla E."/>
            <person name="Dalrymple B.P."/>
            <person name="de Bono B."/>
            <person name="Della Gatta G."/>
            <person name="di Bernardo D."/>
            <person name="Down T."/>
            <person name="Engstrom P."/>
            <person name="Fagiolini M."/>
            <person name="Faulkner G."/>
            <person name="Fletcher C.F."/>
            <person name="Fukushima T."/>
            <person name="Furuno M."/>
            <person name="Futaki S."/>
            <person name="Gariboldi M."/>
            <person name="Georgii-Hemming P."/>
            <person name="Gingeras T.R."/>
            <person name="Gojobori T."/>
            <person name="Green R.E."/>
            <person name="Gustincich S."/>
            <person name="Harbers M."/>
            <person name="Hayashi Y."/>
            <person name="Hensch T.K."/>
            <person name="Hirokawa N."/>
            <person name="Hill D."/>
            <person name="Huminiecki L."/>
            <person name="Iacono M."/>
            <person name="Ikeo K."/>
            <person name="Iwama A."/>
            <person name="Ishikawa T."/>
            <person name="Jakt M."/>
            <person name="Kanapin A."/>
            <person name="Katoh M."/>
            <person name="Kawasawa Y."/>
            <person name="Kelso J."/>
            <person name="Kitamura H."/>
            <person name="Kitano H."/>
            <person name="Kollias G."/>
            <person name="Krishnan S.P."/>
            <person name="Kruger A."/>
            <person name="Kummerfeld S.K."/>
            <person name="Kurochkin I.V."/>
            <person name="Lareau L.F."/>
            <person name="Lazarevic D."/>
            <person name="Lipovich L."/>
            <person name="Liu J."/>
            <person name="Liuni S."/>
            <person name="McWilliam S."/>
            <person name="Madan Babu M."/>
            <person name="Madera M."/>
            <person name="Marchionni L."/>
            <person name="Matsuda H."/>
            <person name="Matsuzawa S."/>
            <person name="Miki H."/>
            <person name="Mignone F."/>
            <person name="Miyake S."/>
            <person name="Morris K."/>
            <person name="Mottagui-Tabar S."/>
            <person name="Mulder N."/>
            <person name="Nakano N."/>
            <person name="Nakauchi H."/>
            <person name="Ng P."/>
            <person name="Nilsson R."/>
            <person name="Nishiguchi S."/>
            <person name="Nishikawa S."/>
            <person name="Nori F."/>
            <person name="Ohara O."/>
            <person name="Okazaki Y."/>
            <person name="Orlando V."/>
            <person name="Pang K.C."/>
            <person name="Pavan W.J."/>
            <person name="Pavesi G."/>
            <person name="Pesole G."/>
            <person name="Petrovsky N."/>
            <person name="Piazza S."/>
            <person name="Reed J."/>
            <person name="Reid J.F."/>
            <person name="Ring B.Z."/>
            <person name="Ringwald M."/>
            <person name="Rost B."/>
            <person name="Ruan Y."/>
            <person name="Salzberg S.L."/>
            <person name="Sandelin A."/>
            <person name="Schneider C."/>
            <person name="Schoenbach C."/>
            <person name="Sekiguchi K."/>
            <person name="Semple C.A."/>
            <person name="Seno S."/>
            <person name="Sessa L."/>
            <person name="Sheng Y."/>
            <person name="Shibata Y."/>
            <person name="Shimada H."/>
            <person name="Shimada K."/>
            <person name="Silva D."/>
            <person name="Sinclair B."/>
            <person name="Sperling S."/>
            <person name="Stupka E."/>
            <person name="Sugiura K."/>
            <person name="Sultana R."/>
            <person name="Takenaka Y."/>
            <person name="Taki K."/>
            <person name="Tammoja K."/>
            <person name="Tan S.L."/>
            <person name="Tang S."/>
            <person name="Taylor M.S."/>
            <person name="Tegner J."/>
            <person name="Teichmann S.A."/>
            <person name="Ueda H.R."/>
            <person name="van Nimwegen E."/>
            <person name="Verardo R."/>
            <person name="Wei C.L."/>
            <person name="Yagi K."/>
            <person name="Yamanishi H."/>
            <person name="Zabarovsky E."/>
            <person name="Zhu S."/>
            <person name="Zimmer A."/>
            <person name="Hide W."/>
            <person name="Bult C."/>
            <person name="Grimmond S.M."/>
            <person name="Teasdale R.D."/>
            <person name="Liu E.T."/>
            <person name="Brusic V."/>
            <person name="Quackenbush J."/>
            <person name="Wahlestedt C."/>
            <person name="Mattick J.S."/>
            <person name="Hume D.A."/>
            <person name="Kai C."/>
            <person name="Sasaki D."/>
            <person name="Tomaru Y."/>
            <person name="Fukuda S."/>
            <person name="Kanamori-Katayama M."/>
            <person name="Suzuki M."/>
            <person name="Aoki J."/>
            <person name="Arakawa T."/>
            <person name="Iida J."/>
            <person name="Imamura K."/>
            <person name="Itoh M."/>
            <person name="Kato T."/>
            <person name="Kawaji H."/>
            <person name="Kawagashira N."/>
            <person name="Kawashima T."/>
            <person name="Kojima M."/>
            <person name="Kondo S."/>
            <person name="Konno H."/>
            <person name="Nakano K."/>
            <person name="Ninomiya N."/>
            <person name="Nishio T."/>
            <person name="Okada M."/>
            <person name="Plessy C."/>
            <person name="Shibata K."/>
            <person name="Shiraki T."/>
            <person name="Suzuki S."/>
            <person name="Tagami M."/>
            <person name="Waki K."/>
            <person name="Watahiki A."/>
            <person name="Okamura-Oho Y."/>
            <person name="Suzuki H."/>
            <person name="Kawai J."/>
            <person name="Hayashizaki Y."/>
        </authorList>
    </citation>
    <scope>NUCLEOTIDE SEQUENCE [LARGE SCALE MRNA]</scope>
    <source>
        <strain>C57BL/6J</strain>
        <tissue>Tongue</tissue>
    </source>
</reference>
<reference key="2">
    <citation type="journal article" date="2009" name="PLoS Biol.">
        <title>Lineage-specific biology revealed by a finished genome assembly of the mouse.</title>
        <authorList>
            <person name="Church D.M."/>
            <person name="Goodstadt L."/>
            <person name="Hillier L.W."/>
            <person name="Zody M.C."/>
            <person name="Goldstein S."/>
            <person name="She X."/>
            <person name="Bult C.J."/>
            <person name="Agarwala R."/>
            <person name="Cherry J.L."/>
            <person name="DiCuccio M."/>
            <person name="Hlavina W."/>
            <person name="Kapustin Y."/>
            <person name="Meric P."/>
            <person name="Maglott D."/>
            <person name="Birtle Z."/>
            <person name="Marques A.C."/>
            <person name="Graves T."/>
            <person name="Zhou S."/>
            <person name="Teague B."/>
            <person name="Potamousis K."/>
            <person name="Churas C."/>
            <person name="Place M."/>
            <person name="Herschleb J."/>
            <person name="Runnheim R."/>
            <person name="Forrest D."/>
            <person name="Amos-Landgraf J."/>
            <person name="Schwartz D.C."/>
            <person name="Cheng Z."/>
            <person name="Lindblad-Toh K."/>
            <person name="Eichler E.E."/>
            <person name="Ponting C.P."/>
        </authorList>
    </citation>
    <scope>NUCLEOTIDE SEQUENCE [LARGE SCALE GENOMIC DNA]</scope>
    <source>
        <strain>C57BL/6J</strain>
    </source>
</reference>
<reference key="3">
    <citation type="journal article" date="2004" name="Genome Res.">
        <title>The status, quality, and expansion of the NIH full-length cDNA project: the Mammalian Gene Collection (MGC).</title>
        <authorList>
            <consortium name="The MGC Project Team"/>
        </authorList>
    </citation>
    <scope>NUCLEOTIDE SEQUENCE [LARGE SCALE MRNA]</scope>
</reference>
<evidence type="ECO:0000250" key="1">
    <source>
        <dbReference type="UniProtKB" id="O77480"/>
    </source>
</evidence>
<evidence type="ECO:0000250" key="2">
    <source>
        <dbReference type="UniProtKB" id="Q96DP5"/>
    </source>
</evidence>
<evidence type="ECO:0000255" key="3"/>
<evidence type="ECO:0000305" key="4"/>
<feature type="transit peptide" description="Mitochondrion" evidence="3">
    <location>
        <begin position="1"/>
        <end status="unknown"/>
    </location>
</feature>
<feature type="chain" id="PRO_0000010094" description="Methionyl-tRNA formyltransferase, mitochondrial">
    <location>
        <begin status="unknown"/>
        <end position="386"/>
    </location>
</feature>
<feature type="sequence conflict" description="In Ref. 1; BAB26282." evidence="4" ref="1">
    <original>K</original>
    <variation>M</variation>
    <location>
        <position position="40"/>
    </location>
</feature>
<feature type="sequence conflict" description="In Ref. 3; AAH19509." evidence="4" ref="3">
    <original>F</original>
    <variation>S</variation>
    <location>
        <position position="305"/>
    </location>
</feature>
<accession>Q9D799</accession>
<accession>E9QKZ0</accession>
<accession>Q8VE89</accession>
<comment type="function">
    <text evidence="2">Methionyl-tRNA formyltransferase that formylates methionyl-tRNA in mitochondria and is crucial for translation initiation.</text>
</comment>
<comment type="catalytic activity">
    <reaction evidence="2">
        <text>L-methionyl-tRNA(fMet) + (6R)-10-formyltetrahydrofolate = N-formyl-L-methionyl-tRNA(fMet) + (6S)-5,6,7,8-tetrahydrofolate + H(+)</text>
        <dbReference type="Rhea" id="RHEA:24380"/>
        <dbReference type="Rhea" id="RHEA-COMP:9952"/>
        <dbReference type="Rhea" id="RHEA-COMP:9953"/>
        <dbReference type="ChEBI" id="CHEBI:15378"/>
        <dbReference type="ChEBI" id="CHEBI:57453"/>
        <dbReference type="ChEBI" id="CHEBI:78530"/>
        <dbReference type="ChEBI" id="CHEBI:78844"/>
        <dbReference type="ChEBI" id="CHEBI:195366"/>
        <dbReference type="EC" id="2.1.2.9"/>
    </reaction>
    <physiologicalReaction direction="left-to-right" evidence="2">
        <dbReference type="Rhea" id="RHEA:24381"/>
    </physiologicalReaction>
</comment>
<comment type="subcellular location">
    <subcellularLocation>
        <location evidence="1">Mitochondrion</location>
    </subcellularLocation>
</comment>
<comment type="domain">
    <text>Composed of an N- and a C-terminal domain. The N-terminal domain carries the tetrahydrofolate (THF)-binding site and the C-terminal domain is presumably involved in positioning the Met-tRNA substrate for the formylation reaction.</text>
</comment>
<comment type="similarity">
    <text evidence="4">Belongs to the Fmt family.</text>
</comment>
<gene>
    <name type="primary">Mtfmt</name>
    <name type="synonym">Fmt</name>
</gene>
<sequence>MLLPRCCWGRWLMGRRPRCSCQAPAGFDGKDGRGSRVREKPPWRVLFLGTDHFARETLRALHAARDGKEEKLIEKLEVVTVPSLSPKGLPVKQYAIQSQLPVYEWPDVGSGEYDVGVVASFGRLLSEALILKFPYGILNVHPSCLPRWRGPAPIIHTVLHGDTVTGVTIMQIRPKRFDIGPILQQETIPVPPKSTSKELEAVLSKLGANMLISVLKNLPESLNNGRPQPAEGVTYAPKVSAGTSCVKWEEQTSEQVLRLHLAIGDIVPLQTLWMENTVKLLDLVEVNNSILADPKLTGQTVTPGFVVYHRPSQMLLVRCKDGWIGVRSVMLKKTLTATDFYNGYLHAWYQKNSHAHPSQCRFQTLRLPTKMQQKTKLLLCNSALSS</sequence>
<proteinExistence type="evidence at transcript level"/>
<keyword id="KW-0496">Mitochondrion</keyword>
<keyword id="KW-0648">Protein biosynthesis</keyword>
<keyword id="KW-1185">Reference proteome</keyword>
<keyword id="KW-0808">Transferase</keyword>
<keyword id="KW-0809">Transit peptide</keyword>
<name>FMT_MOUSE</name>
<organism>
    <name type="scientific">Mus musculus</name>
    <name type="common">Mouse</name>
    <dbReference type="NCBI Taxonomy" id="10090"/>
    <lineage>
        <taxon>Eukaryota</taxon>
        <taxon>Metazoa</taxon>
        <taxon>Chordata</taxon>
        <taxon>Craniata</taxon>
        <taxon>Vertebrata</taxon>
        <taxon>Euteleostomi</taxon>
        <taxon>Mammalia</taxon>
        <taxon>Eutheria</taxon>
        <taxon>Euarchontoglires</taxon>
        <taxon>Glires</taxon>
        <taxon>Rodentia</taxon>
        <taxon>Myomorpha</taxon>
        <taxon>Muroidea</taxon>
        <taxon>Muridae</taxon>
        <taxon>Murinae</taxon>
        <taxon>Mus</taxon>
        <taxon>Mus</taxon>
    </lineage>
</organism>
<protein>
    <recommendedName>
        <fullName>Methionyl-tRNA formyltransferase, mitochondrial</fullName>
        <shortName>MtFMT</shortName>
        <ecNumber evidence="2">2.1.2.9</ecNumber>
    </recommendedName>
</protein>